<gene>
    <name evidence="1" type="primary">xseA</name>
    <name type="ordered locus">lpg0826</name>
</gene>
<evidence type="ECO:0000255" key="1">
    <source>
        <dbReference type="HAMAP-Rule" id="MF_00378"/>
    </source>
</evidence>
<proteinExistence type="inferred from homology"/>
<comment type="function">
    <text evidence="1">Bidirectionally degrades single-stranded DNA into large acid-insoluble oligonucleotides, which are then degraded further into small acid-soluble oligonucleotides.</text>
</comment>
<comment type="catalytic activity">
    <reaction evidence="1">
        <text>Exonucleolytic cleavage in either 5'- to 3'- or 3'- to 5'-direction to yield nucleoside 5'-phosphates.</text>
        <dbReference type="EC" id="3.1.11.6"/>
    </reaction>
</comment>
<comment type="subunit">
    <text evidence="1">Heterooligomer composed of large and small subunits.</text>
</comment>
<comment type="subcellular location">
    <subcellularLocation>
        <location evidence="1">Cytoplasm</location>
    </subcellularLocation>
</comment>
<comment type="similarity">
    <text evidence="1">Belongs to the XseA family.</text>
</comment>
<protein>
    <recommendedName>
        <fullName evidence="1">Exodeoxyribonuclease 7 large subunit</fullName>
        <ecNumber evidence="1">3.1.11.6</ecNumber>
    </recommendedName>
    <alternativeName>
        <fullName evidence="1">Exodeoxyribonuclease VII large subunit</fullName>
        <shortName evidence="1">Exonuclease VII large subunit</shortName>
    </alternativeName>
</protein>
<reference key="1">
    <citation type="journal article" date="2004" name="Science">
        <title>The genomic sequence of the accidental pathogen Legionella pneumophila.</title>
        <authorList>
            <person name="Chien M."/>
            <person name="Morozova I."/>
            <person name="Shi S."/>
            <person name="Sheng H."/>
            <person name="Chen J."/>
            <person name="Gomez S.M."/>
            <person name="Asamani G."/>
            <person name="Hill K."/>
            <person name="Nuara J."/>
            <person name="Feder M."/>
            <person name="Rineer J."/>
            <person name="Greenberg J.J."/>
            <person name="Steshenko V."/>
            <person name="Park S.H."/>
            <person name="Zhao B."/>
            <person name="Teplitskaya E."/>
            <person name="Edwards J.R."/>
            <person name="Pampou S."/>
            <person name="Georghiou A."/>
            <person name="Chou I.-C."/>
            <person name="Iannuccilli W."/>
            <person name="Ulz M.E."/>
            <person name="Kim D.H."/>
            <person name="Geringer-Sameth A."/>
            <person name="Goldsberry C."/>
            <person name="Morozov P."/>
            <person name="Fischer S.G."/>
            <person name="Segal G."/>
            <person name="Qu X."/>
            <person name="Rzhetsky A."/>
            <person name="Zhang P."/>
            <person name="Cayanis E."/>
            <person name="De Jong P.J."/>
            <person name="Ju J."/>
            <person name="Kalachikov S."/>
            <person name="Shuman H.A."/>
            <person name="Russo J.J."/>
        </authorList>
    </citation>
    <scope>NUCLEOTIDE SEQUENCE [LARGE SCALE GENOMIC DNA]</scope>
    <source>
        <strain>Philadelphia 1 / ATCC 33152 / DSM 7513</strain>
    </source>
</reference>
<keyword id="KW-0963">Cytoplasm</keyword>
<keyword id="KW-0269">Exonuclease</keyword>
<keyword id="KW-0378">Hydrolase</keyword>
<keyword id="KW-0540">Nuclease</keyword>
<keyword id="KW-1185">Reference proteome</keyword>
<name>EX7L_LEGPH</name>
<organism>
    <name type="scientific">Legionella pneumophila subsp. pneumophila (strain Philadelphia 1 / ATCC 33152 / DSM 7513)</name>
    <dbReference type="NCBI Taxonomy" id="272624"/>
    <lineage>
        <taxon>Bacteria</taxon>
        <taxon>Pseudomonadati</taxon>
        <taxon>Pseudomonadota</taxon>
        <taxon>Gammaproteobacteria</taxon>
        <taxon>Legionellales</taxon>
        <taxon>Legionellaceae</taxon>
        <taxon>Legionella</taxon>
    </lineage>
</organism>
<accession>Q5ZXA6</accession>
<sequence>MSSQLPILTVSQLNRQVKGFLENEIGLVHVEGEISNLSKPSSGHYYFTLKDSTAQIRCAFFKNRHSNSLLRNFNDGQQIVATGKLSLYEARGEYQLIVEEIVKAGMGILYQRFEELKIKLASEGLFNPERKKPLPRIPETIGIITSPTGAAIQDILSTLARRFPIARIIIYPSEVQGQTAPQQLVKALKLANAHKRCQVLILARGGGSIEDLWAFNDEYLARQIAISEIPVVSGIGHETDFTIADFVADYRAETPTAAATAVTPNCIELFNILDTAIYRLHDAIIRLVKGLQLKLNHLIDKIASPRQTISTYWQTLDYLERQLISAMTQFINLNINKVNIFSTQLQANNPKTQIERTKTQLRQLIMQLNQEIRIQVNQLKNQLSTNLSTLHAVSPLATLDRGYAIVSKNQRILFAAQQAQIGDTIDVRLAKGSLACEVTQIKD</sequence>
<feature type="chain" id="PRO_0000273669" description="Exodeoxyribonuclease 7 large subunit">
    <location>
        <begin position="1"/>
        <end position="443"/>
    </location>
</feature>
<dbReference type="EC" id="3.1.11.6" evidence="1"/>
<dbReference type="EMBL" id="AE017354">
    <property type="protein sequence ID" value="AAU26914.1"/>
    <property type="molecule type" value="Genomic_DNA"/>
</dbReference>
<dbReference type="RefSeq" id="WP_010946562.1">
    <property type="nucleotide sequence ID" value="NC_002942.5"/>
</dbReference>
<dbReference type="RefSeq" id="YP_094861.1">
    <property type="nucleotide sequence ID" value="NC_002942.5"/>
</dbReference>
<dbReference type="SMR" id="Q5ZXA6"/>
<dbReference type="STRING" id="272624.lpg0826"/>
<dbReference type="PaxDb" id="272624-lpg0826"/>
<dbReference type="GeneID" id="57034814"/>
<dbReference type="KEGG" id="lpn:lpg0826"/>
<dbReference type="PATRIC" id="fig|272624.6.peg.855"/>
<dbReference type="eggNOG" id="COG1570">
    <property type="taxonomic scope" value="Bacteria"/>
</dbReference>
<dbReference type="HOGENOM" id="CLU_023625_3_1_6"/>
<dbReference type="OrthoDB" id="9802795at2"/>
<dbReference type="Proteomes" id="UP000000609">
    <property type="component" value="Chromosome"/>
</dbReference>
<dbReference type="GO" id="GO:0005737">
    <property type="term" value="C:cytoplasm"/>
    <property type="evidence" value="ECO:0007669"/>
    <property type="project" value="UniProtKB-SubCell"/>
</dbReference>
<dbReference type="GO" id="GO:0009318">
    <property type="term" value="C:exodeoxyribonuclease VII complex"/>
    <property type="evidence" value="ECO:0007669"/>
    <property type="project" value="InterPro"/>
</dbReference>
<dbReference type="GO" id="GO:0008855">
    <property type="term" value="F:exodeoxyribonuclease VII activity"/>
    <property type="evidence" value="ECO:0007669"/>
    <property type="project" value="UniProtKB-UniRule"/>
</dbReference>
<dbReference type="GO" id="GO:0003676">
    <property type="term" value="F:nucleic acid binding"/>
    <property type="evidence" value="ECO:0007669"/>
    <property type="project" value="InterPro"/>
</dbReference>
<dbReference type="GO" id="GO:0006308">
    <property type="term" value="P:DNA catabolic process"/>
    <property type="evidence" value="ECO:0007669"/>
    <property type="project" value="UniProtKB-UniRule"/>
</dbReference>
<dbReference type="CDD" id="cd04489">
    <property type="entry name" value="ExoVII_LU_OBF"/>
    <property type="match status" value="1"/>
</dbReference>
<dbReference type="Gene3D" id="2.40.50.140">
    <property type="entry name" value="Nucleic acid-binding proteins"/>
    <property type="match status" value="1"/>
</dbReference>
<dbReference type="HAMAP" id="MF_00378">
    <property type="entry name" value="Exonuc_7_L"/>
    <property type="match status" value="1"/>
</dbReference>
<dbReference type="InterPro" id="IPR003753">
    <property type="entry name" value="Exonuc_VII_L"/>
</dbReference>
<dbReference type="InterPro" id="IPR020579">
    <property type="entry name" value="Exonuc_VII_lsu_C"/>
</dbReference>
<dbReference type="InterPro" id="IPR012340">
    <property type="entry name" value="NA-bd_OB-fold"/>
</dbReference>
<dbReference type="InterPro" id="IPR025824">
    <property type="entry name" value="OB-fold_nuc-bd_dom"/>
</dbReference>
<dbReference type="NCBIfam" id="TIGR00237">
    <property type="entry name" value="xseA"/>
    <property type="match status" value="1"/>
</dbReference>
<dbReference type="PANTHER" id="PTHR30008">
    <property type="entry name" value="EXODEOXYRIBONUCLEASE 7 LARGE SUBUNIT"/>
    <property type="match status" value="1"/>
</dbReference>
<dbReference type="PANTHER" id="PTHR30008:SF0">
    <property type="entry name" value="EXODEOXYRIBONUCLEASE 7 LARGE SUBUNIT"/>
    <property type="match status" value="1"/>
</dbReference>
<dbReference type="Pfam" id="PF02601">
    <property type="entry name" value="Exonuc_VII_L"/>
    <property type="match status" value="1"/>
</dbReference>
<dbReference type="Pfam" id="PF13742">
    <property type="entry name" value="tRNA_anti_2"/>
    <property type="match status" value="1"/>
</dbReference>